<protein>
    <recommendedName>
        <fullName evidence="1">Bifunctional protein FolD</fullName>
    </recommendedName>
    <domain>
        <recommendedName>
            <fullName evidence="1">Methylenetetrahydrofolate dehydrogenase</fullName>
            <ecNumber evidence="1">1.5.1.5</ecNumber>
        </recommendedName>
    </domain>
    <domain>
        <recommendedName>
            <fullName evidence="1">Methenyltetrahydrofolate cyclohydrolase</fullName>
            <ecNumber evidence="1">3.5.4.9</ecNumber>
        </recommendedName>
    </domain>
</protein>
<sequence>MVLILDGKEVAKEVRASLVPRVAKFKETYGRAPQLSVVIVGDDKASHVYVKNKKIACEKIGMTSTIHTLPAETTQSELNQILSKLNNDNGVDGILVQFPLPKHLSSDEVLKLVSAEKDADGLTYESLGYFFAGKPLVSPCTPAGVMEILKHYRIPVEGKKAVVVGRSNIVGKPMALLLTEANATVTLCHSKTSNMSELTKQADLVVVAAGKARLLGKEDFKKDAIVIDVGMHGSGQGGKLCGDVRFEELDGWAKAATPVPGGVGPMTIAMLLKNTCQLAEQRARDPQF</sequence>
<reference key="1">
    <citation type="journal article" date="2004" name="Science">
        <title>A predator unmasked: life cycle of Bdellovibrio bacteriovorus from a genomic perspective.</title>
        <authorList>
            <person name="Rendulic S."/>
            <person name="Jagtap P."/>
            <person name="Rosinus A."/>
            <person name="Eppinger M."/>
            <person name="Baar C."/>
            <person name="Lanz C."/>
            <person name="Keller H."/>
            <person name="Lambert C."/>
            <person name="Evans K.J."/>
            <person name="Goesmann A."/>
            <person name="Meyer F."/>
            <person name="Sockett R.E."/>
            <person name="Schuster S.C."/>
        </authorList>
    </citation>
    <scope>NUCLEOTIDE SEQUENCE [LARGE SCALE GENOMIC DNA]</scope>
    <source>
        <strain>ATCC 15356 / DSM 50701 / NCIMB 9529 / HD100</strain>
    </source>
</reference>
<evidence type="ECO:0000255" key="1">
    <source>
        <dbReference type="HAMAP-Rule" id="MF_01576"/>
    </source>
</evidence>
<accession>Q6MI74</accession>
<keyword id="KW-0028">Amino-acid biosynthesis</keyword>
<keyword id="KW-0368">Histidine biosynthesis</keyword>
<keyword id="KW-0378">Hydrolase</keyword>
<keyword id="KW-0486">Methionine biosynthesis</keyword>
<keyword id="KW-0511">Multifunctional enzyme</keyword>
<keyword id="KW-0521">NADP</keyword>
<keyword id="KW-0554">One-carbon metabolism</keyword>
<keyword id="KW-0560">Oxidoreductase</keyword>
<keyword id="KW-0658">Purine biosynthesis</keyword>
<keyword id="KW-1185">Reference proteome</keyword>
<gene>
    <name evidence="1" type="primary">folD</name>
    <name type="ordered locus">Bd3295</name>
</gene>
<feature type="chain" id="PRO_0000268279" description="Bifunctional protein FolD">
    <location>
        <begin position="1"/>
        <end position="288"/>
    </location>
</feature>
<feature type="binding site" evidence="1">
    <location>
        <begin position="165"/>
        <end position="167"/>
    </location>
    <ligand>
        <name>NADP(+)</name>
        <dbReference type="ChEBI" id="CHEBI:58349"/>
    </ligand>
</feature>
<feature type="binding site" evidence="1">
    <location>
        <position position="190"/>
    </location>
    <ligand>
        <name>NADP(+)</name>
        <dbReference type="ChEBI" id="CHEBI:58349"/>
    </ligand>
</feature>
<organism>
    <name type="scientific">Bdellovibrio bacteriovorus (strain ATCC 15356 / DSM 50701 / NCIMB 9529 / HD100)</name>
    <dbReference type="NCBI Taxonomy" id="264462"/>
    <lineage>
        <taxon>Bacteria</taxon>
        <taxon>Pseudomonadati</taxon>
        <taxon>Bdellovibrionota</taxon>
        <taxon>Bdellovibrionia</taxon>
        <taxon>Bdellovibrionales</taxon>
        <taxon>Pseudobdellovibrionaceae</taxon>
        <taxon>Bdellovibrio</taxon>
    </lineage>
</organism>
<name>FOLD_BDEBA</name>
<dbReference type="EC" id="1.5.1.5" evidence="1"/>
<dbReference type="EC" id="3.5.4.9" evidence="1"/>
<dbReference type="EMBL" id="BX842655">
    <property type="protein sequence ID" value="CAE78106.1"/>
    <property type="molecule type" value="Genomic_DNA"/>
</dbReference>
<dbReference type="RefSeq" id="WP_011165644.1">
    <property type="nucleotide sequence ID" value="NC_005363.1"/>
</dbReference>
<dbReference type="SMR" id="Q6MI74"/>
<dbReference type="STRING" id="264462.Bd3295"/>
<dbReference type="GeneID" id="93014126"/>
<dbReference type="KEGG" id="bba:Bd3295"/>
<dbReference type="eggNOG" id="COG0190">
    <property type="taxonomic scope" value="Bacteria"/>
</dbReference>
<dbReference type="HOGENOM" id="CLU_034045_2_1_7"/>
<dbReference type="UniPathway" id="UPA00193"/>
<dbReference type="Proteomes" id="UP000008080">
    <property type="component" value="Chromosome"/>
</dbReference>
<dbReference type="GO" id="GO:0005829">
    <property type="term" value="C:cytosol"/>
    <property type="evidence" value="ECO:0007669"/>
    <property type="project" value="TreeGrafter"/>
</dbReference>
<dbReference type="GO" id="GO:0004477">
    <property type="term" value="F:methenyltetrahydrofolate cyclohydrolase activity"/>
    <property type="evidence" value="ECO:0007669"/>
    <property type="project" value="UniProtKB-UniRule"/>
</dbReference>
<dbReference type="GO" id="GO:0004488">
    <property type="term" value="F:methylenetetrahydrofolate dehydrogenase (NADP+) activity"/>
    <property type="evidence" value="ECO:0007669"/>
    <property type="project" value="UniProtKB-UniRule"/>
</dbReference>
<dbReference type="GO" id="GO:0000105">
    <property type="term" value="P:L-histidine biosynthetic process"/>
    <property type="evidence" value="ECO:0007669"/>
    <property type="project" value="UniProtKB-KW"/>
</dbReference>
<dbReference type="GO" id="GO:0009086">
    <property type="term" value="P:methionine biosynthetic process"/>
    <property type="evidence" value="ECO:0007669"/>
    <property type="project" value="UniProtKB-KW"/>
</dbReference>
<dbReference type="GO" id="GO:0006164">
    <property type="term" value="P:purine nucleotide biosynthetic process"/>
    <property type="evidence" value="ECO:0007669"/>
    <property type="project" value="UniProtKB-KW"/>
</dbReference>
<dbReference type="GO" id="GO:0035999">
    <property type="term" value="P:tetrahydrofolate interconversion"/>
    <property type="evidence" value="ECO:0007669"/>
    <property type="project" value="UniProtKB-UniRule"/>
</dbReference>
<dbReference type="CDD" id="cd01080">
    <property type="entry name" value="NAD_bind_m-THF_DH_Cyclohyd"/>
    <property type="match status" value="1"/>
</dbReference>
<dbReference type="FunFam" id="3.40.50.720:FF:000094">
    <property type="entry name" value="Bifunctional protein FolD"/>
    <property type="match status" value="1"/>
</dbReference>
<dbReference type="FunFam" id="3.40.50.10860:FF:000005">
    <property type="entry name" value="C-1-tetrahydrofolate synthase, cytoplasmic, putative"/>
    <property type="match status" value="1"/>
</dbReference>
<dbReference type="Gene3D" id="3.40.50.10860">
    <property type="entry name" value="Leucine Dehydrogenase, chain A, domain 1"/>
    <property type="match status" value="1"/>
</dbReference>
<dbReference type="Gene3D" id="3.40.50.720">
    <property type="entry name" value="NAD(P)-binding Rossmann-like Domain"/>
    <property type="match status" value="1"/>
</dbReference>
<dbReference type="HAMAP" id="MF_01576">
    <property type="entry name" value="THF_DHG_CYH"/>
    <property type="match status" value="1"/>
</dbReference>
<dbReference type="InterPro" id="IPR046346">
    <property type="entry name" value="Aminoacid_DH-like_N_sf"/>
</dbReference>
<dbReference type="InterPro" id="IPR036291">
    <property type="entry name" value="NAD(P)-bd_dom_sf"/>
</dbReference>
<dbReference type="InterPro" id="IPR000672">
    <property type="entry name" value="THF_DH/CycHdrlase"/>
</dbReference>
<dbReference type="InterPro" id="IPR020630">
    <property type="entry name" value="THF_DH/CycHdrlase_cat_dom"/>
</dbReference>
<dbReference type="InterPro" id="IPR020867">
    <property type="entry name" value="THF_DH/CycHdrlase_CS"/>
</dbReference>
<dbReference type="InterPro" id="IPR020631">
    <property type="entry name" value="THF_DH/CycHdrlase_NAD-bd_dom"/>
</dbReference>
<dbReference type="NCBIfam" id="NF010783">
    <property type="entry name" value="PRK14186.1"/>
    <property type="match status" value="1"/>
</dbReference>
<dbReference type="PANTHER" id="PTHR48099:SF5">
    <property type="entry name" value="C-1-TETRAHYDROFOLATE SYNTHASE, CYTOPLASMIC"/>
    <property type="match status" value="1"/>
</dbReference>
<dbReference type="PANTHER" id="PTHR48099">
    <property type="entry name" value="C-1-TETRAHYDROFOLATE SYNTHASE, CYTOPLASMIC-RELATED"/>
    <property type="match status" value="1"/>
</dbReference>
<dbReference type="Pfam" id="PF00763">
    <property type="entry name" value="THF_DHG_CYH"/>
    <property type="match status" value="1"/>
</dbReference>
<dbReference type="Pfam" id="PF02882">
    <property type="entry name" value="THF_DHG_CYH_C"/>
    <property type="match status" value="1"/>
</dbReference>
<dbReference type="PRINTS" id="PR00085">
    <property type="entry name" value="THFDHDRGNASE"/>
</dbReference>
<dbReference type="SUPFAM" id="SSF53223">
    <property type="entry name" value="Aminoacid dehydrogenase-like, N-terminal domain"/>
    <property type="match status" value="1"/>
</dbReference>
<dbReference type="SUPFAM" id="SSF51735">
    <property type="entry name" value="NAD(P)-binding Rossmann-fold domains"/>
    <property type="match status" value="1"/>
</dbReference>
<dbReference type="PROSITE" id="PS00767">
    <property type="entry name" value="THF_DHG_CYH_2"/>
    <property type="match status" value="1"/>
</dbReference>
<comment type="function">
    <text evidence="1">Catalyzes the oxidation of 5,10-methylenetetrahydrofolate to 5,10-methenyltetrahydrofolate and then the hydrolysis of 5,10-methenyltetrahydrofolate to 10-formyltetrahydrofolate.</text>
</comment>
<comment type="catalytic activity">
    <reaction evidence="1">
        <text>(6R)-5,10-methylene-5,6,7,8-tetrahydrofolate + NADP(+) = (6R)-5,10-methenyltetrahydrofolate + NADPH</text>
        <dbReference type="Rhea" id="RHEA:22812"/>
        <dbReference type="ChEBI" id="CHEBI:15636"/>
        <dbReference type="ChEBI" id="CHEBI:57455"/>
        <dbReference type="ChEBI" id="CHEBI:57783"/>
        <dbReference type="ChEBI" id="CHEBI:58349"/>
        <dbReference type="EC" id="1.5.1.5"/>
    </reaction>
</comment>
<comment type="catalytic activity">
    <reaction evidence="1">
        <text>(6R)-5,10-methenyltetrahydrofolate + H2O = (6R)-10-formyltetrahydrofolate + H(+)</text>
        <dbReference type="Rhea" id="RHEA:23700"/>
        <dbReference type="ChEBI" id="CHEBI:15377"/>
        <dbReference type="ChEBI" id="CHEBI:15378"/>
        <dbReference type="ChEBI" id="CHEBI:57455"/>
        <dbReference type="ChEBI" id="CHEBI:195366"/>
        <dbReference type="EC" id="3.5.4.9"/>
    </reaction>
</comment>
<comment type="pathway">
    <text evidence="1">One-carbon metabolism; tetrahydrofolate interconversion.</text>
</comment>
<comment type="subunit">
    <text evidence="1">Homodimer.</text>
</comment>
<comment type="similarity">
    <text evidence="1">Belongs to the tetrahydrofolate dehydrogenase/cyclohydrolase family.</text>
</comment>
<proteinExistence type="inferred from homology"/>